<evidence type="ECO:0000256" key="1">
    <source>
        <dbReference type="SAM" id="MobiDB-lite"/>
    </source>
</evidence>
<protein>
    <recommendedName>
        <fullName>Uncharacterized protein MT2051</fullName>
    </recommendedName>
</protein>
<organism>
    <name type="scientific">Mycobacterium tuberculosis (strain CDC 1551 / Oshkosh)</name>
    <dbReference type="NCBI Taxonomy" id="83331"/>
    <lineage>
        <taxon>Bacteria</taxon>
        <taxon>Bacillati</taxon>
        <taxon>Actinomycetota</taxon>
        <taxon>Actinomycetes</taxon>
        <taxon>Mycobacteriales</taxon>
        <taxon>Mycobacteriaceae</taxon>
        <taxon>Mycobacterium</taxon>
        <taxon>Mycobacterium tuberculosis complex</taxon>
    </lineage>
</organism>
<reference key="1">
    <citation type="journal article" date="2002" name="J. Bacteriol.">
        <title>Whole-genome comparison of Mycobacterium tuberculosis clinical and laboratory strains.</title>
        <authorList>
            <person name="Fleischmann R.D."/>
            <person name="Alland D."/>
            <person name="Eisen J.A."/>
            <person name="Carpenter L."/>
            <person name="White O."/>
            <person name="Peterson J.D."/>
            <person name="DeBoy R.T."/>
            <person name="Dodson R.J."/>
            <person name="Gwinn M.L."/>
            <person name="Haft D.H."/>
            <person name="Hickey E.K."/>
            <person name="Kolonay J.F."/>
            <person name="Nelson W.C."/>
            <person name="Umayam L.A."/>
            <person name="Ermolaeva M.D."/>
            <person name="Salzberg S.L."/>
            <person name="Delcher A."/>
            <person name="Utterback T.R."/>
            <person name="Weidman J.F."/>
            <person name="Khouri H.M."/>
            <person name="Gill J."/>
            <person name="Mikula A."/>
            <person name="Bishai W."/>
            <person name="Jacobs W.R. Jr."/>
            <person name="Venter J.C."/>
            <person name="Fraser C.M."/>
        </authorList>
    </citation>
    <scope>NUCLEOTIDE SEQUENCE [LARGE SCALE GENOMIC DNA]</scope>
    <source>
        <strain>CDC 1551 / Oshkosh</strain>
    </source>
</reference>
<gene>
    <name type="ordered locus">MT2051</name>
</gene>
<sequence>MVASGAATKGVTVMKQTPPAAVGRRHLLEISASAAGVIALSACSGSPPEPGKGRPDTTPEQEVPVTAPEDLMREHGVLKRILLIYREGIRRLQADDQSPAPALNESAQIIRRFIEDYHGQLEEQYVFPKLEQAGKLTDITSVLRTQHQRGRVLTDRVLAATTAAAAFDQPARDTLAQDMAAYIRMFEPHEAREDTVVFPALRDVMSAVEFRDMAETFEDEEHRRFGEAGFQSVVDKVADIEKSLGIYDLSQFTPS</sequence>
<feature type="chain" id="PRO_0000427444" description="Uncharacterized protein MT2051">
    <location>
        <begin position="1"/>
        <end position="255"/>
    </location>
</feature>
<feature type="region of interest" description="Disordered" evidence="1">
    <location>
        <begin position="42"/>
        <end position="67"/>
    </location>
</feature>
<keyword id="KW-1185">Reference proteome</keyword>
<accession>P9WLP2</accession>
<accession>L0T8B5</accession>
<accession>P64915</accession>
<accession>Q10863</accession>
<dbReference type="EMBL" id="AE000516">
    <property type="protein sequence ID" value="AAK46328.1"/>
    <property type="molecule type" value="Genomic_DNA"/>
</dbReference>
<dbReference type="PIR" id="A70758">
    <property type="entry name" value="A70758"/>
</dbReference>
<dbReference type="RefSeq" id="WP_003410019.1">
    <property type="nucleotide sequence ID" value="NZ_KK341227.1"/>
</dbReference>
<dbReference type="SMR" id="P9WLP2"/>
<dbReference type="KEGG" id="mtc:MT2051"/>
<dbReference type="PATRIC" id="fig|83331.31.peg.2208"/>
<dbReference type="HOGENOM" id="CLU_094544_1_0_11"/>
<dbReference type="Proteomes" id="UP000001020">
    <property type="component" value="Chromosome"/>
</dbReference>
<dbReference type="GO" id="GO:0005886">
    <property type="term" value="C:plasma membrane"/>
    <property type="evidence" value="ECO:0007669"/>
    <property type="project" value="TreeGrafter"/>
</dbReference>
<dbReference type="CDD" id="cd12108">
    <property type="entry name" value="Hr-like"/>
    <property type="match status" value="1"/>
</dbReference>
<dbReference type="Gene3D" id="1.20.120.520">
    <property type="entry name" value="nmb1532 protein domain like"/>
    <property type="match status" value="1"/>
</dbReference>
<dbReference type="InterPro" id="IPR012312">
    <property type="entry name" value="Hemerythrin-like"/>
</dbReference>
<dbReference type="PANTHER" id="PTHR39966">
    <property type="entry name" value="BLL2471 PROTEIN-RELATED"/>
    <property type="match status" value="1"/>
</dbReference>
<dbReference type="PANTHER" id="PTHR39966:SF1">
    <property type="entry name" value="HEMERYTHRIN-LIKE DOMAIN-CONTAINING PROTEIN"/>
    <property type="match status" value="1"/>
</dbReference>
<dbReference type="Pfam" id="PF01814">
    <property type="entry name" value="Hemerythrin"/>
    <property type="match status" value="2"/>
</dbReference>
<proteinExistence type="predicted"/>
<name>Y1995_MYCTO</name>